<reference key="1">
    <citation type="journal article" date="2009" name="Appl. Environ. Microbiol.">
        <title>Three genomes from the phylum Acidobacteria provide insight into the lifestyles of these microorganisms in soils.</title>
        <authorList>
            <person name="Ward N.L."/>
            <person name="Challacombe J.F."/>
            <person name="Janssen P.H."/>
            <person name="Henrissat B."/>
            <person name="Coutinho P.M."/>
            <person name="Wu M."/>
            <person name="Xie G."/>
            <person name="Haft D.H."/>
            <person name="Sait M."/>
            <person name="Badger J."/>
            <person name="Barabote R.D."/>
            <person name="Bradley B."/>
            <person name="Brettin T.S."/>
            <person name="Brinkac L.M."/>
            <person name="Bruce D."/>
            <person name="Creasy T."/>
            <person name="Daugherty S.C."/>
            <person name="Davidsen T.M."/>
            <person name="DeBoy R.T."/>
            <person name="Detter J.C."/>
            <person name="Dodson R.J."/>
            <person name="Durkin A.S."/>
            <person name="Ganapathy A."/>
            <person name="Gwinn-Giglio M."/>
            <person name="Han C.S."/>
            <person name="Khouri H."/>
            <person name="Kiss H."/>
            <person name="Kothari S.P."/>
            <person name="Madupu R."/>
            <person name="Nelson K.E."/>
            <person name="Nelson W.C."/>
            <person name="Paulsen I."/>
            <person name="Penn K."/>
            <person name="Ren Q."/>
            <person name="Rosovitz M.J."/>
            <person name="Selengut J.D."/>
            <person name="Shrivastava S."/>
            <person name="Sullivan S.A."/>
            <person name="Tapia R."/>
            <person name="Thompson L.S."/>
            <person name="Watkins K.L."/>
            <person name="Yang Q."/>
            <person name="Yu C."/>
            <person name="Zafar N."/>
            <person name="Zhou L."/>
            <person name="Kuske C.R."/>
        </authorList>
    </citation>
    <scope>NUCLEOTIDE SEQUENCE [LARGE SCALE GENOMIC DNA]</scope>
    <source>
        <strain>ATCC 51196 / DSM 11244 / BCRC 80197 / JCM 7670 / NBRC 15755 / NCIMB 13165 / 161</strain>
    </source>
</reference>
<name>DCD_ACIC5</name>
<dbReference type="EC" id="3.5.4.13" evidence="1"/>
<dbReference type="EMBL" id="CP001472">
    <property type="protein sequence ID" value="ACO31321.1"/>
    <property type="molecule type" value="Genomic_DNA"/>
</dbReference>
<dbReference type="RefSeq" id="WP_015898368.1">
    <property type="nucleotide sequence ID" value="NC_012483.1"/>
</dbReference>
<dbReference type="SMR" id="C1F6A5"/>
<dbReference type="FunCoup" id="C1F6A5">
    <property type="interactions" value="229"/>
</dbReference>
<dbReference type="STRING" id="240015.ACP_3335"/>
<dbReference type="KEGG" id="aca:ACP_3335"/>
<dbReference type="eggNOG" id="COG0717">
    <property type="taxonomic scope" value="Bacteria"/>
</dbReference>
<dbReference type="HOGENOM" id="CLU_087476_4_0_0"/>
<dbReference type="InParanoid" id="C1F6A5"/>
<dbReference type="OrthoDB" id="9780202at2"/>
<dbReference type="UniPathway" id="UPA00610">
    <property type="reaction ID" value="UER00665"/>
</dbReference>
<dbReference type="Proteomes" id="UP000002207">
    <property type="component" value="Chromosome"/>
</dbReference>
<dbReference type="GO" id="GO:0008829">
    <property type="term" value="F:dCTP deaminase activity"/>
    <property type="evidence" value="ECO:0007669"/>
    <property type="project" value="UniProtKB-UniRule"/>
</dbReference>
<dbReference type="GO" id="GO:0000166">
    <property type="term" value="F:nucleotide binding"/>
    <property type="evidence" value="ECO:0007669"/>
    <property type="project" value="UniProtKB-KW"/>
</dbReference>
<dbReference type="GO" id="GO:0006226">
    <property type="term" value="P:dUMP biosynthetic process"/>
    <property type="evidence" value="ECO:0007669"/>
    <property type="project" value="UniProtKB-UniPathway"/>
</dbReference>
<dbReference type="GO" id="GO:0006229">
    <property type="term" value="P:dUTP biosynthetic process"/>
    <property type="evidence" value="ECO:0007669"/>
    <property type="project" value="UniProtKB-UniRule"/>
</dbReference>
<dbReference type="GO" id="GO:0015949">
    <property type="term" value="P:nucleobase-containing small molecule interconversion"/>
    <property type="evidence" value="ECO:0007669"/>
    <property type="project" value="TreeGrafter"/>
</dbReference>
<dbReference type="CDD" id="cd07557">
    <property type="entry name" value="trimeric_dUTPase"/>
    <property type="match status" value="1"/>
</dbReference>
<dbReference type="FunFam" id="2.70.40.10:FF:000001">
    <property type="entry name" value="dCTP deaminase"/>
    <property type="match status" value="1"/>
</dbReference>
<dbReference type="Gene3D" id="2.70.40.10">
    <property type="match status" value="1"/>
</dbReference>
<dbReference type="HAMAP" id="MF_00146">
    <property type="entry name" value="dCTP_deaminase"/>
    <property type="match status" value="1"/>
</dbReference>
<dbReference type="InterPro" id="IPR011962">
    <property type="entry name" value="dCTP_deaminase"/>
</dbReference>
<dbReference type="InterPro" id="IPR036157">
    <property type="entry name" value="dUTPase-like_sf"/>
</dbReference>
<dbReference type="InterPro" id="IPR033704">
    <property type="entry name" value="dUTPase_trimeric"/>
</dbReference>
<dbReference type="NCBIfam" id="TIGR02274">
    <property type="entry name" value="dCTP_deam"/>
    <property type="match status" value="1"/>
</dbReference>
<dbReference type="PANTHER" id="PTHR42680">
    <property type="entry name" value="DCTP DEAMINASE"/>
    <property type="match status" value="1"/>
</dbReference>
<dbReference type="PANTHER" id="PTHR42680:SF3">
    <property type="entry name" value="DCTP DEAMINASE"/>
    <property type="match status" value="1"/>
</dbReference>
<dbReference type="Pfam" id="PF22769">
    <property type="entry name" value="DCD"/>
    <property type="match status" value="1"/>
</dbReference>
<dbReference type="SUPFAM" id="SSF51283">
    <property type="entry name" value="dUTPase-like"/>
    <property type="match status" value="1"/>
</dbReference>
<protein>
    <recommendedName>
        <fullName evidence="1">dCTP deaminase</fullName>
        <ecNumber evidence="1">3.5.4.13</ecNumber>
    </recommendedName>
    <alternativeName>
        <fullName evidence="1">Deoxycytidine triphosphate deaminase</fullName>
    </alternativeName>
</protein>
<accession>C1F6A5</accession>
<proteinExistence type="inferred from homology"/>
<keyword id="KW-0378">Hydrolase</keyword>
<keyword id="KW-0546">Nucleotide metabolism</keyword>
<keyword id="KW-0547">Nucleotide-binding</keyword>
<keyword id="KW-1185">Reference proteome</keyword>
<sequence>MSIKSDRWIREQALKGMIEPFSEKQVREGVISYGLSSYGYDLRVSNEFKIFTNVNSAIIDPKNFDERSFVTVEADSVIVPPNSFALARSIEYFRIPRDVLTICVGKSTYARCGIIVNVTPFEPEWEGYVTLEISNTTPLPAKVYANEGLCQILFFQGDEPCEISYADKKGKYQNQQGIVLPKL</sequence>
<gene>
    <name evidence="1" type="primary">dcd</name>
    <name type="ordered locus">ACP_3335</name>
</gene>
<evidence type="ECO:0000255" key="1">
    <source>
        <dbReference type="HAMAP-Rule" id="MF_00146"/>
    </source>
</evidence>
<feature type="chain" id="PRO_1000123134" description="dCTP deaminase">
    <location>
        <begin position="1"/>
        <end position="183"/>
    </location>
</feature>
<feature type="active site" description="Proton donor/acceptor" evidence="1">
    <location>
        <position position="132"/>
    </location>
</feature>
<feature type="binding site" evidence="1">
    <location>
        <begin position="106"/>
        <end position="111"/>
    </location>
    <ligand>
        <name>dCTP</name>
        <dbReference type="ChEBI" id="CHEBI:61481"/>
    </ligand>
</feature>
<feature type="binding site" evidence="1">
    <location>
        <begin position="130"/>
        <end position="132"/>
    </location>
    <ligand>
        <name>dCTP</name>
        <dbReference type="ChEBI" id="CHEBI:61481"/>
    </ligand>
</feature>
<feature type="binding site" evidence="1">
    <location>
        <position position="151"/>
    </location>
    <ligand>
        <name>dCTP</name>
        <dbReference type="ChEBI" id="CHEBI:61481"/>
    </ligand>
</feature>
<feature type="binding site" evidence="1">
    <location>
        <position position="165"/>
    </location>
    <ligand>
        <name>dCTP</name>
        <dbReference type="ChEBI" id="CHEBI:61481"/>
    </ligand>
</feature>
<feature type="binding site" evidence="1">
    <location>
        <position position="175"/>
    </location>
    <ligand>
        <name>dCTP</name>
        <dbReference type="ChEBI" id="CHEBI:61481"/>
    </ligand>
</feature>
<organism>
    <name type="scientific">Acidobacterium capsulatum (strain ATCC 51196 / DSM 11244 / BCRC 80197 / JCM 7670 / NBRC 15755 / NCIMB 13165 / 161)</name>
    <dbReference type="NCBI Taxonomy" id="240015"/>
    <lineage>
        <taxon>Bacteria</taxon>
        <taxon>Pseudomonadati</taxon>
        <taxon>Acidobacteriota</taxon>
        <taxon>Terriglobia</taxon>
        <taxon>Terriglobales</taxon>
        <taxon>Acidobacteriaceae</taxon>
        <taxon>Acidobacterium</taxon>
    </lineage>
</organism>
<comment type="function">
    <text evidence="1">Catalyzes the deamination of dCTP to dUTP.</text>
</comment>
<comment type="catalytic activity">
    <reaction evidence="1">
        <text>dCTP + H2O + H(+) = dUTP + NH4(+)</text>
        <dbReference type="Rhea" id="RHEA:22680"/>
        <dbReference type="ChEBI" id="CHEBI:15377"/>
        <dbReference type="ChEBI" id="CHEBI:15378"/>
        <dbReference type="ChEBI" id="CHEBI:28938"/>
        <dbReference type="ChEBI" id="CHEBI:61481"/>
        <dbReference type="ChEBI" id="CHEBI:61555"/>
        <dbReference type="EC" id="3.5.4.13"/>
    </reaction>
</comment>
<comment type="pathway">
    <text evidence="1">Pyrimidine metabolism; dUMP biosynthesis; dUMP from dCTP (dUTP route): step 1/2.</text>
</comment>
<comment type="subunit">
    <text evidence="1">Homotrimer.</text>
</comment>
<comment type="similarity">
    <text evidence="1">Belongs to the dCTP deaminase family.</text>
</comment>